<comment type="similarity">
    <text evidence="1">Belongs to the UPF0248 family.</text>
</comment>
<name>YC12A_PYRHO</name>
<dbReference type="EMBL" id="BA000001">
    <property type="status" value="NOT_ANNOTATED_CDS"/>
    <property type="molecule type" value="Genomic_DNA"/>
</dbReference>
<dbReference type="RefSeq" id="WP_010885299.1">
    <property type="nucleotide sequence ID" value="NC_000961.1"/>
</dbReference>
<dbReference type="GeneID" id="1443534"/>
<dbReference type="OrthoDB" id="14794at2157"/>
<dbReference type="Proteomes" id="UP000000752">
    <property type="component" value="Chromosome"/>
</dbReference>
<dbReference type="HAMAP" id="MF_01245">
    <property type="entry name" value="UPF0248"/>
    <property type="match status" value="1"/>
</dbReference>
<dbReference type="InterPro" id="IPR040459">
    <property type="entry name" value="MJ1316"/>
</dbReference>
<dbReference type="InterPro" id="IPR007547">
    <property type="entry name" value="UPF0248"/>
</dbReference>
<dbReference type="NCBIfam" id="NF003272">
    <property type="entry name" value="PRK04257.1"/>
    <property type="match status" value="1"/>
</dbReference>
<dbReference type="Pfam" id="PF04457">
    <property type="entry name" value="MJ1316"/>
    <property type="match status" value="1"/>
</dbReference>
<proteinExistence type="inferred from homology"/>
<feature type="chain" id="PRO_0000053420" description="UPF0248 protein PH1212.1">
    <location>
        <begin position="1"/>
        <end position="83"/>
    </location>
</feature>
<evidence type="ECO:0000255" key="1">
    <source>
        <dbReference type="HAMAP-Rule" id="MF_01245"/>
    </source>
</evidence>
<accession>P59734</accession>
<gene>
    <name type="ordered locus">PH1212.1</name>
</gene>
<sequence>MRKGTVKEVLAKIKYDPRENENDYYLIIEHRGDYGNVKKIPVNLIELGHGYFFVGETQIPYHRILKVVRKDGRVIWESRKIRK</sequence>
<organism>
    <name type="scientific">Pyrococcus horikoshii (strain ATCC 700860 / DSM 12428 / JCM 9974 / NBRC 100139 / OT-3)</name>
    <dbReference type="NCBI Taxonomy" id="70601"/>
    <lineage>
        <taxon>Archaea</taxon>
        <taxon>Methanobacteriati</taxon>
        <taxon>Methanobacteriota</taxon>
        <taxon>Thermococci</taxon>
        <taxon>Thermococcales</taxon>
        <taxon>Thermococcaceae</taxon>
        <taxon>Pyrococcus</taxon>
    </lineage>
</organism>
<protein>
    <recommendedName>
        <fullName evidence="1">UPF0248 protein PH1212.1</fullName>
    </recommendedName>
</protein>
<reference key="1">
    <citation type="journal article" date="1998" name="DNA Res.">
        <title>Complete sequence and gene organization of the genome of a hyper-thermophilic archaebacterium, Pyrococcus horikoshii OT3.</title>
        <authorList>
            <person name="Kawarabayasi Y."/>
            <person name="Sawada M."/>
            <person name="Horikawa H."/>
            <person name="Haikawa Y."/>
            <person name="Hino Y."/>
            <person name="Yamamoto S."/>
            <person name="Sekine M."/>
            <person name="Baba S."/>
            <person name="Kosugi H."/>
            <person name="Hosoyama A."/>
            <person name="Nagai Y."/>
            <person name="Sakai M."/>
            <person name="Ogura K."/>
            <person name="Otsuka R."/>
            <person name="Nakazawa H."/>
            <person name="Takamiya M."/>
            <person name="Ohfuku Y."/>
            <person name="Funahashi T."/>
            <person name="Tanaka T."/>
            <person name="Kudoh Y."/>
            <person name="Yamazaki J."/>
            <person name="Kushida N."/>
            <person name="Oguchi A."/>
            <person name="Aoki K."/>
            <person name="Yoshizawa T."/>
            <person name="Nakamura Y."/>
            <person name="Robb F.T."/>
            <person name="Horikoshi K."/>
            <person name="Masuchi Y."/>
            <person name="Shizuya H."/>
            <person name="Kikuchi H."/>
        </authorList>
    </citation>
    <scope>NUCLEOTIDE SEQUENCE [LARGE SCALE GENOMIC DNA]</scope>
    <source>
        <strain>ATCC 700860 / DSM 12428 / JCM 9974 / NBRC 100139 / OT-3</strain>
    </source>
</reference>